<feature type="chain" id="PRO_1000009792" description="dCTP deaminase">
    <location>
        <begin position="1"/>
        <end position="194"/>
    </location>
</feature>
<feature type="active site" description="Proton donor/acceptor" evidence="1">
    <location>
        <position position="138"/>
    </location>
</feature>
<feature type="binding site" evidence="1">
    <location>
        <begin position="110"/>
        <end position="115"/>
    </location>
    <ligand>
        <name>dCTP</name>
        <dbReference type="ChEBI" id="CHEBI:61481"/>
    </ligand>
</feature>
<feature type="binding site" evidence="1">
    <location>
        <position position="128"/>
    </location>
    <ligand>
        <name>dCTP</name>
        <dbReference type="ChEBI" id="CHEBI:61481"/>
    </ligand>
</feature>
<feature type="binding site" evidence="1">
    <location>
        <begin position="136"/>
        <end position="138"/>
    </location>
    <ligand>
        <name>dCTP</name>
        <dbReference type="ChEBI" id="CHEBI:61481"/>
    </ligand>
</feature>
<feature type="binding site" evidence="1">
    <location>
        <position position="171"/>
    </location>
    <ligand>
        <name>dCTP</name>
        <dbReference type="ChEBI" id="CHEBI:61481"/>
    </ligand>
</feature>
<feature type="binding site" evidence="1">
    <location>
        <position position="178"/>
    </location>
    <ligand>
        <name>dCTP</name>
        <dbReference type="ChEBI" id="CHEBI:61481"/>
    </ligand>
</feature>
<feature type="binding site" evidence="1">
    <location>
        <position position="182"/>
    </location>
    <ligand>
        <name>dCTP</name>
        <dbReference type="ChEBI" id="CHEBI:61481"/>
    </ligand>
</feature>
<gene>
    <name evidence="1" type="primary">dcd</name>
    <name type="ordered locus">Ping_0756</name>
</gene>
<reference key="1">
    <citation type="journal article" date="2008" name="BMC Genomics">
        <title>Genomics of an extreme psychrophile, Psychromonas ingrahamii.</title>
        <authorList>
            <person name="Riley M."/>
            <person name="Staley J.T."/>
            <person name="Danchin A."/>
            <person name="Wang T.Z."/>
            <person name="Brettin T.S."/>
            <person name="Hauser L.J."/>
            <person name="Land M.L."/>
            <person name="Thompson L.S."/>
        </authorList>
    </citation>
    <scope>NUCLEOTIDE SEQUENCE [LARGE SCALE GENOMIC DNA]</scope>
    <source>
        <strain>DSM 17664 / CCUG 51855 / 37</strain>
    </source>
</reference>
<evidence type="ECO:0000255" key="1">
    <source>
        <dbReference type="HAMAP-Rule" id="MF_00146"/>
    </source>
</evidence>
<keyword id="KW-0378">Hydrolase</keyword>
<keyword id="KW-0546">Nucleotide metabolism</keyword>
<keyword id="KW-0547">Nucleotide-binding</keyword>
<keyword id="KW-1185">Reference proteome</keyword>
<proteinExistence type="inferred from homology"/>
<accession>A1SSZ3</accession>
<sequence length="194" mass="21399">MRLCDTHIEEYLDAGKIVITPRPPKSAISGVSVDIRLGNEFRVFSEHTTPYIDLSGPKEEVSSALDKVMSEPIIIAKNESFFLHPGELALAVTYENVTLPDDIVGWLDGRSSLARLGLMVHVTAHRIDPGWSGKIVLEFYNSGKIPLALRPEMTIAALNFEVLSAPAARPYNKRVDAKYQVQQGAVASRINQDN</sequence>
<organism>
    <name type="scientific">Psychromonas ingrahamii (strain DSM 17664 / CCUG 51855 / 37)</name>
    <dbReference type="NCBI Taxonomy" id="357804"/>
    <lineage>
        <taxon>Bacteria</taxon>
        <taxon>Pseudomonadati</taxon>
        <taxon>Pseudomonadota</taxon>
        <taxon>Gammaproteobacteria</taxon>
        <taxon>Alteromonadales</taxon>
        <taxon>Psychromonadaceae</taxon>
        <taxon>Psychromonas</taxon>
    </lineage>
</organism>
<comment type="function">
    <text evidence="1">Catalyzes the deamination of dCTP to dUTP.</text>
</comment>
<comment type="catalytic activity">
    <reaction evidence="1">
        <text>dCTP + H2O + H(+) = dUTP + NH4(+)</text>
        <dbReference type="Rhea" id="RHEA:22680"/>
        <dbReference type="ChEBI" id="CHEBI:15377"/>
        <dbReference type="ChEBI" id="CHEBI:15378"/>
        <dbReference type="ChEBI" id="CHEBI:28938"/>
        <dbReference type="ChEBI" id="CHEBI:61481"/>
        <dbReference type="ChEBI" id="CHEBI:61555"/>
        <dbReference type="EC" id="3.5.4.13"/>
    </reaction>
</comment>
<comment type="pathway">
    <text evidence="1">Pyrimidine metabolism; dUMP biosynthesis; dUMP from dCTP (dUTP route): step 1/2.</text>
</comment>
<comment type="subunit">
    <text evidence="1">Homotrimer.</text>
</comment>
<comment type="similarity">
    <text evidence="1">Belongs to the dCTP deaminase family.</text>
</comment>
<dbReference type="EC" id="3.5.4.13" evidence="1"/>
<dbReference type="EMBL" id="CP000510">
    <property type="protein sequence ID" value="ABM02608.1"/>
    <property type="molecule type" value="Genomic_DNA"/>
</dbReference>
<dbReference type="RefSeq" id="WP_011769167.1">
    <property type="nucleotide sequence ID" value="NC_008709.1"/>
</dbReference>
<dbReference type="SMR" id="A1SSZ3"/>
<dbReference type="STRING" id="357804.Ping_0756"/>
<dbReference type="KEGG" id="pin:Ping_0756"/>
<dbReference type="eggNOG" id="COG0717">
    <property type="taxonomic scope" value="Bacteria"/>
</dbReference>
<dbReference type="HOGENOM" id="CLU_087476_2_0_6"/>
<dbReference type="OrthoDB" id="9780956at2"/>
<dbReference type="UniPathway" id="UPA00610">
    <property type="reaction ID" value="UER00665"/>
</dbReference>
<dbReference type="Proteomes" id="UP000000639">
    <property type="component" value="Chromosome"/>
</dbReference>
<dbReference type="GO" id="GO:0008829">
    <property type="term" value="F:dCTP deaminase activity"/>
    <property type="evidence" value="ECO:0007669"/>
    <property type="project" value="UniProtKB-UniRule"/>
</dbReference>
<dbReference type="GO" id="GO:0000166">
    <property type="term" value="F:nucleotide binding"/>
    <property type="evidence" value="ECO:0007669"/>
    <property type="project" value="UniProtKB-KW"/>
</dbReference>
<dbReference type="GO" id="GO:0006226">
    <property type="term" value="P:dUMP biosynthetic process"/>
    <property type="evidence" value="ECO:0007669"/>
    <property type="project" value="UniProtKB-UniPathway"/>
</dbReference>
<dbReference type="GO" id="GO:0006229">
    <property type="term" value="P:dUTP biosynthetic process"/>
    <property type="evidence" value="ECO:0007669"/>
    <property type="project" value="UniProtKB-UniRule"/>
</dbReference>
<dbReference type="GO" id="GO:0015949">
    <property type="term" value="P:nucleobase-containing small molecule interconversion"/>
    <property type="evidence" value="ECO:0007669"/>
    <property type="project" value="TreeGrafter"/>
</dbReference>
<dbReference type="CDD" id="cd07557">
    <property type="entry name" value="trimeric_dUTPase"/>
    <property type="match status" value="1"/>
</dbReference>
<dbReference type="FunFam" id="2.70.40.10:FF:000003">
    <property type="entry name" value="dCTP deaminase"/>
    <property type="match status" value="1"/>
</dbReference>
<dbReference type="Gene3D" id="2.70.40.10">
    <property type="match status" value="1"/>
</dbReference>
<dbReference type="HAMAP" id="MF_00146">
    <property type="entry name" value="dCTP_deaminase"/>
    <property type="match status" value="1"/>
</dbReference>
<dbReference type="InterPro" id="IPR011962">
    <property type="entry name" value="dCTP_deaminase"/>
</dbReference>
<dbReference type="InterPro" id="IPR036157">
    <property type="entry name" value="dUTPase-like_sf"/>
</dbReference>
<dbReference type="InterPro" id="IPR033704">
    <property type="entry name" value="dUTPase_trimeric"/>
</dbReference>
<dbReference type="NCBIfam" id="TIGR02274">
    <property type="entry name" value="dCTP_deam"/>
    <property type="match status" value="1"/>
</dbReference>
<dbReference type="PANTHER" id="PTHR42680">
    <property type="entry name" value="DCTP DEAMINASE"/>
    <property type="match status" value="1"/>
</dbReference>
<dbReference type="PANTHER" id="PTHR42680:SF3">
    <property type="entry name" value="DCTP DEAMINASE"/>
    <property type="match status" value="1"/>
</dbReference>
<dbReference type="Pfam" id="PF22769">
    <property type="entry name" value="DCD"/>
    <property type="match status" value="1"/>
</dbReference>
<dbReference type="SUPFAM" id="SSF51283">
    <property type="entry name" value="dUTPase-like"/>
    <property type="match status" value="1"/>
</dbReference>
<protein>
    <recommendedName>
        <fullName evidence="1">dCTP deaminase</fullName>
        <ecNumber evidence="1">3.5.4.13</ecNumber>
    </recommendedName>
    <alternativeName>
        <fullName evidence="1">Deoxycytidine triphosphate deaminase</fullName>
    </alternativeName>
</protein>
<name>DCD_PSYIN</name>